<gene>
    <name evidence="1" type="primary">mcsB</name>
    <name type="ordered locus">GK0077</name>
</gene>
<keyword id="KW-0021">Allosteric enzyme</keyword>
<keyword id="KW-0067">ATP-binding</keyword>
<keyword id="KW-0418">Kinase</keyword>
<keyword id="KW-0547">Nucleotide-binding</keyword>
<keyword id="KW-1185">Reference proteome</keyword>
<keyword id="KW-0808">Transferase</keyword>
<reference key="1">
    <citation type="journal article" date="2004" name="Nucleic Acids Res.">
        <title>Thermoadaptation trait revealed by the genome sequence of thermophilic Geobacillus kaustophilus.</title>
        <authorList>
            <person name="Takami H."/>
            <person name="Takaki Y."/>
            <person name="Chee G.-J."/>
            <person name="Nishi S."/>
            <person name="Shimamura S."/>
            <person name="Suzuki H."/>
            <person name="Matsui S."/>
            <person name="Uchiyama I."/>
        </authorList>
    </citation>
    <scope>NUCLEOTIDE SEQUENCE [LARGE SCALE GENOMIC DNA]</scope>
    <source>
        <strain>HTA426</strain>
    </source>
</reference>
<sequence>MSFEKFFNTAVSAWMSQEGPDSDIVLSSRIRLARNIVDFRFPTLFSSEEAMQIVALFERTFAHRSYGGAGRFELLKMSELQPIEKRVLVEKHLISPHLAEDSPFGACLLSENEEISIMINEEDHIRIQCLFPGLQLAEALEAASELDDWIEGYVNYAFDERLGYLTSCPTNVGTGLRASVMMHLPALVLTQQINRIIPAINQLGLVVRGTYGEGSEALGNIFQISNQITLGKSEEDIVADLHTIVQQLIAQERAARQALVKTLGIQLEDKVFRSYGILANCRVIESKEAAQCLSDVRLGIDLGYIKNISRNILNELMILTQPGFLQQYAGGALRPEERDVRRAALIRERLKMEERRKMEGDER</sequence>
<feature type="chain" id="PRO_1000025874" description="Protein-arginine kinase">
    <location>
        <begin position="1"/>
        <end position="363"/>
    </location>
</feature>
<feature type="domain" description="Phosphagen kinase C-terminal" evidence="1">
    <location>
        <begin position="24"/>
        <end position="255"/>
    </location>
</feature>
<feature type="short sequence motif" description="RDXXRA motif of the pArg binding pocket involved in allosteric regulation" evidence="1">
    <location>
        <begin position="338"/>
        <end position="343"/>
    </location>
</feature>
<feature type="binding site" evidence="1">
    <location>
        <begin position="27"/>
        <end position="31"/>
    </location>
    <ligand>
        <name>ATP</name>
        <dbReference type="ChEBI" id="CHEBI:30616"/>
    </ligand>
</feature>
<feature type="binding site" evidence="1">
    <location>
        <position position="92"/>
    </location>
    <ligand>
        <name>ATP</name>
        <dbReference type="ChEBI" id="CHEBI:30616"/>
    </ligand>
</feature>
<feature type="binding site" evidence="1">
    <location>
        <position position="126"/>
    </location>
    <ligand>
        <name>ATP</name>
        <dbReference type="ChEBI" id="CHEBI:30616"/>
    </ligand>
</feature>
<feature type="binding site" evidence="1">
    <location>
        <begin position="177"/>
        <end position="181"/>
    </location>
    <ligand>
        <name>ATP</name>
        <dbReference type="ChEBI" id="CHEBI:30616"/>
    </ligand>
</feature>
<feature type="binding site" evidence="1">
    <location>
        <begin position="208"/>
        <end position="213"/>
    </location>
    <ligand>
        <name>ATP</name>
        <dbReference type="ChEBI" id="CHEBI:30616"/>
    </ligand>
</feature>
<name>MCSB_GEOKA</name>
<accession>Q5L437</accession>
<organism>
    <name type="scientific">Geobacillus kaustophilus (strain HTA426)</name>
    <dbReference type="NCBI Taxonomy" id="235909"/>
    <lineage>
        <taxon>Bacteria</taxon>
        <taxon>Bacillati</taxon>
        <taxon>Bacillota</taxon>
        <taxon>Bacilli</taxon>
        <taxon>Bacillales</taxon>
        <taxon>Anoxybacillaceae</taxon>
        <taxon>Geobacillus</taxon>
        <taxon>Geobacillus thermoleovorans group</taxon>
    </lineage>
</organism>
<evidence type="ECO:0000255" key="1">
    <source>
        <dbReference type="HAMAP-Rule" id="MF_00602"/>
    </source>
</evidence>
<proteinExistence type="inferred from homology"/>
<comment type="function">
    <text evidence="1">Catalyzes the specific phosphorylation of arginine residues in a large number of proteins. Is part of the bacterial stress response system. Protein arginine phosphorylation has a physiologically important role and is involved in the regulation of many critical cellular processes, such as protein homeostasis, motility, competence, and stringent and stress responses, by regulating gene expression and protein activity.</text>
</comment>
<comment type="catalytic activity">
    <reaction evidence="1">
        <text>L-arginyl-[protein] + ATP = N(omega)-phospho-L-arginyl-[protein] + ADP + H(+)</text>
        <dbReference type="Rhea" id="RHEA:43384"/>
        <dbReference type="Rhea" id="RHEA-COMP:10532"/>
        <dbReference type="Rhea" id="RHEA-COMP:10533"/>
        <dbReference type="ChEBI" id="CHEBI:15378"/>
        <dbReference type="ChEBI" id="CHEBI:29965"/>
        <dbReference type="ChEBI" id="CHEBI:30616"/>
        <dbReference type="ChEBI" id="CHEBI:83226"/>
        <dbReference type="ChEBI" id="CHEBI:456216"/>
        <dbReference type="EC" id="2.7.14.1"/>
    </reaction>
</comment>
<comment type="activity regulation">
    <text evidence="1">Appears to be allosterically activated by the binding of pArg-containing polypeptides to the pArg-binding pocket localized in the C-terminal domain of McsB.</text>
</comment>
<comment type="similarity">
    <text evidence="1">Belongs to the ATP:guanido phosphotransferase family.</text>
</comment>
<dbReference type="EC" id="2.7.14.1" evidence="1"/>
<dbReference type="EMBL" id="BA000043">
    <property type="protein sequence ID" value="BAD74362.1"/>
    <property type="molecule type" value="Genomic_DNA"/>
</dbReference>
<dbReference type="RefSeq" id="WP_011229592.1">
    <property type="nucleotide sequence ID" value="NC_006510.1"/>
</dbReference>
<dbReference type="SMR" id="Q5L437"/>
<dbReference type="STRING" id="235909.GK0077"/>
<dbReference type="KEGG" id="gka:GK0077"/>
<dbReference type="eggNOG" id="COG3869">
    <property type="taxonomic scope" value="Bacteria"/>
</dbReference>
<dbReference type="HOGENOM" id="CLU_066591_1_0_9"/>
<dbReference type="Proteomes" id="UP000001172">
    <property type="component" value="Chromosome"/>
</dbReference>
<dbReference type="GO" id="GO:0005615">
    <property type="term" value="C:extracellular space"/>
    <property type="evidence" value="ECO:0007669"/>
    <property type="project" value="TreeGrafter"/>
</dbReference>
<dbReference type="GO" id="GO:0005524">
    <property type="term" value="F:ATP binding"/>
    <property type="evidence" value="ECO:0007669"/>
    <property type="project" value="UniProtKB-KW"/>
</dbReference>
<dbReference type="GO" id="GO:0004111">
    <property type="term" value="F:creatine kinase activity"/>
    <property type="evidence" value="ECO:0007669"/>
    <property type="project" value="InterPro"/>
</dbReference>
<dbReference type="GO" id="GO:0004672">
    <property type="term" value="F:protein kinase activity"/>
    <property type="evidence" value="ECO:0007669"/>
    <property type="project" value="UniProtKB-UniRule"/>
</dbReference>
<dbReference type="GO" id="GO:0046314">
    <property type="term" value="P:phosphocreatine biosynthetic process"/>
    <property type="evidence" value="ECO:0007669"/>
    <property type="project" value="InterPro"/>
</dbReference>
<dbReference type="CDD" id="cd07930">
    <property type="entry name" value="bacterial_phosphagen_kinase"/>
    <property type="match status" value="1"/>
</dbReference>
<dbReference type="FunFam" id="3.30.590.10:FF:000007">
    <property type="entry name" value="Protein-arginine kinase"/>
    <property type="match status" value="1"/>
</dbReference>
<dbReference type="Gene3D" id="3.30.590.10">
    <property type="entry name" value="Glutamine synthetase/guanido kinase, catalytic domain"/>
    <property type="match status" value="1"/>
</dbReference>
<dbReference type="HAMAP" id="MF_00602">
    <property type="entry name" value="Prot_Arg_kinase"/>
    <property type="match status" value="1"/>
</dbReference>
<dbReference type="InterPro" id="IPR023660">
    <property type="entry name" value="Arg_Kinase"/>
</dbReference>
<dbReference type="InterPro" id="IPR000749">
    <property type="entry name" value="ATP-guanido_PTrfase"/>
</dbReference>
<dbReference type="InterPro" id="IPR022415">
    <property type="entry name" value="ATP-guanido_PTrfase_AS"/>
</dbReference>
<dbReference type="InterPro" id="IPR022414">
    <property type="entry name" value="ATP-guanido_PTrfase_cat"/>
</dbReference>
<dbReference type="InterPro" id="IPR014746">
    <property type="entry name" value="Gln_synth/guanido_kin_cat_dom"/>
</dbReference>
<dbReference type="NCBIfam" id="NF002194">
    <property type="entry name" value="PRK01059.1-4"/>
    <property type="match status" value="1"/>
</dbReference>
<dbReference type="NCBIfam" id="NF002195">
    <property type="entry name" value="PRK01059.1-5"/>
    <property type="match status" value="1"/>
</dbReference>
<dbReference type="PANTHER" id="PTHR11547:SF38">
    <property type="entry name" value="ARGININE KINASE 1-RELATED"/>
    <property type="match status" value="1"/>
</dbReference>
<dbReference type="PANTHER" id="PTHR11547">
    <property type="entry name" value="ARGININE OR CREATINE KINASE"/>
    <property type="match status" value="1"/>
</dbReference>
<dbReference type="Pfam" id="PF00217">
    <property type="entry name" value="ATP-gua_Ptrans"/>
    <property type="match status" value="1"/>
</dbReference>
<dbReference type="SUPFAM" id="SSF55931">
    <property type="entry name" value="Glutamine synthetase/guanido kinase"/>
    <property type="match status" value="1"/>
</dbReference>
<dbReference type="PROSITE" id="PS00112">
    <property type="entry name" value="PHOSPHAGEN_KINASE"/>
    <property type="match status" value="1"/>
</dbReference>
<dbReference type="PROSITE" id="PS51510">
    <property type="entry name" value="PHOSPHAGEN_KINASE_C"/>
    <property type="match status" value="1"/>
</dbReference>
<protein>
    <recommendedName>
        <fullName evidence="1">Protein-arginine kinase</fullName>
        <ecNumber evidence="1">2.7.14.1</ecNumber>
    </recommendedName>
</protein>